<proteinExistence type="evidence at protein level"/>
<name>MIM2_YEAST</name>
<evidence type="ECO:0000255" key="1"/>
<evidence type="ECO:0000269" key="2">
    <source>
    </source>
</evidence>
<evidence type="ECO:0000303" key="3">
    <source>
    </source>
</evidence>
<evidence type="ECO:0000305" key="4"/>
<feature type="chain" id="PRO_0000247352" description="Mitochondrial import protein 2">
    <location>
        <begin position="1"/>
        <end position="87"/>
    </location>
</feature>
<feature type="topological domain" description="Cytoplasmic" evidence="2">
    <location>
        <begin position="1"/>
        <end position="53"/>
    </location>
</feature>
<feature type="transmembrane region" description="Helical" evidence="1">
    <location>
        <begin position="54"/>
        <end position="71"/>
    </location>
</feature>
<feature type="topological domain" description="Mitochondrial intermembrane" evidence="2">
    <location>
        <begin position="72"/>
        <end position="87"/>
    </location>
</feature>
<accession>Q3E798</accession>
<accession>D6VYA0</accession>
<gene>
    <name evidence="3" type="primary">MIM2</name>
    <name type="ordered locus">YLR099W-A</name>
</gene>
<protein>
    <recommendedName>
        <fullName evidence="3">Mitochondrial import protein 2</fullName>
    </recommendedName>
</protein>
<organism>
    <name type="scientific">Saccharomyces cerevisiae (strain ATCC 204508 / S288c)</name>
    <name type="common">Baker's yeast</name>
    <dbReference type="NCBI Taxonomy" id="559292"/>
    <lineage>
        <taxon>Eukaryota</taxon>
        <taxon>Fungi</taxon>
        <taxon>Dikarya</taxon>
        <taxon>Ascomycota</taxon>
        <taxon>Saccharomycotina</taxon>
        <taxon>Saccharomycetes</taxon>
        <taxon>Saccharomycetales</taxon>
        <taxon>Saccharomycetaceae</taxon>
        <taxon>Saccharomyces</taxon>
    </lineage>
</organism>
<keyword id="KW-0472">Membrane</keyword>
<keyword id="KW-0496">Mitochondrion</keyword>
<keyword id="KW-1000">Mitochondrion outer membrane</keyword>
<keyword id="KW-0653">Protein transport</keyword>
<keyword id="KW-1185">Reference proteome</keyword>
<keyword id="KW-0812">Transmembrane</keyword>
<keyword id="KW-1133">Transmembrane helix</keyword>
<keyword id="KW-0813">Transport</keyword>
<dbReference type="EMBL" id="U53876">
    <property type="status" value="NOT_ANNOTATED_CDS"/>
    <property type="molecule type" value="Genomic_DNA"/>
</dbReference>
<dbReference type="EMBL" id="BK006945">
    <property type="protein sequence ID" value="DAA09416.1"/>
    <property type="molecule type" value="Genomic_DNA"/>
</dbReference>
<dbReference type="RefSeq" id="NP_076901.1">
    <property type="nucleotide sequence ID" value="NM_001184484.1"/>
</dbReference>
<dbReference type="SMR" id="Q3E798"/>
<dbReference type="BioGRID" id="31373">
    <property type="interactions" value="7"/>
</dbReference>
<dbReference type="FunCoup" id="Q3E798">
    <property type="interactions" value="15"/>
</dbReference>
<dbReference type="STRING" id="4932.YLR099W-A"/>
<dbReference type="TCDB" id="1.B.33.3.1">
    <property type="family name" value="the outer membrane protein insertion porin (bam complex) (ompip) family"/>
</dbReference>
<dbReference type="iPTMnet" id="Q3E798"/>
<dbReference type="PaxDb" id="4932-YLR099W-A"/>
<dbReference type="PeptideAtlas" id="Q3E798"/>
<dbReference type="EnsemblFungi" id="YLR099W-A_mRNA">
    <property type="protein sequence ID" value="YLR099W-A"/>
    <property type="gene ID" value="YLR099W-A"/>
</dbReference>
<dbReference type="GeneID" id="850789"/>
<dbReference type="KEGG" id="sce:YLR099W-A"/>
<dbReference type="AGR" id="SGD:S000007618"/>
<dbReference type="SGD" id="S000007618">
    <property type="gene designation" value="MIM2"/>
</dbReference>
<dbReference type="VEuPathDB" id="FungiDB:YLR099W-A"/>
<dbReference type="eggNOG" id="ENOG502SBHE">
    <property type="taxonomic scope" value="Eukaryota"/>
</dbReference>
<dbReference type="HOGENOM" id="CLU_186257_0_0_1"/>
<dbReference type="InParanoid" id="Q3E798"/>
<dbReference type="OrthoDB" id="5555533at2759"/>
<dbReference type="BioCyc" id="YEAST:G3O-32570-MONOMER"/>
<dbReference type="BioGRID-ORCS" id="850789">
    <property type="hits" value="8 hits in 10 CRISPR screens"/>
</dbReference>
<dbReference type="PRO" id="PR:Q3E798"/>
<dbReference type="Proteomes" id="UP000002311">
    <property type="component" value="Chromosome XII"/>
</dbReference>
<dbReference type="RNAct" id="Q3E798">
    <property type="molecule type" value="protein"/>
</dbReference>
<dbReference type="GO" id="GO:0140595">
    <property type="term" value="C:MIM complex"/>
    <property type="evidence" value="ECO:0000314"/>
    <property type="project" value="SGD"/>
</dbReference>
<dbReference type="GO" id="GO:0005741">
    <property type="term" value="C:mitochondrial outer membrane"/>
    <property type="evidence" value="ECO:0000314"/>
    <property type="project" value="SGD"/>
</dbReference>
<dbReference type="GO" id="GO:0070096">
    <property type="term" value="P:mitochondrial outer membrane translocase complex assembly"/>
    <property type="evidence" value="ECO:0000316"/>
    <property type="project" value="SGD"/>
</dbReference>
<dbReference type="GO" id="GO:0045040">
    <property type="term" value="P:protein insertion into mitochondrial outer membrane"/>
    <property type="evidence" value="ECO:0000315"/>
    <property type="project" value="SGD"/>
</dbReference>
<dbReference type="InterPro" id="IPR037652">
    <property type="entry name" value="Mim2"/>
</dbReference>
<dbReference type="PANTHER" id="PTHR28230">
    <property type="entry name" value="CHROMOSOME 1, WHOLE GENOME SHOTGUN SEQUENCE"/>
    <property type="match status" value="1"/>
</dbReference>
<dbReference type="PANTHER" id="PTHR28230:SF1">
    <property type="entry name" value="MITOCHONDRIAL IMPORT PROTEIN 2"/>
    <property type="match status" value="1"/>
</dbReference>
<dbReference type="Pfam" id="PF19117">
    <property type="entry name" value="Mim2"/>
    <property type="match status" value="1"/>
</dbReference>
<comment type="function">
    <text evidence="2">Component of the MIM complex required for outer membrane protein import (PubMed:22467864). Involved in import of the subset of proteins with multiple alpha-helical transmembrane segments, including UGO1, TOM20 and FZO1 (PubMed:22467864).</text>
</comment>
<comment type="subunit">
    <text evidence="2">Component of the MIM complex containing at least MIM1 and MIM2 (PubMed:22467864). Interacts with MIM1; interaction is direct (PubMed:22467864).</text>
</comment>
<comment type="subcellular location">
    <subcellularLocation>
        <location evidence="2">Mitochondrion outer membrane</location>
        <topology evidence="1">Single-pass membrane protein</topology>
    </subcellularLocation>
</comment>
<comment type="disruption phenotype">
    <text evidence="2">Causes severe growth phenotype and leads to reduced biogenesis of mitochondrial proteins and abnormal mitochondrial morphology (PubMed:22467864). Compromises import of multispan mitochondrial outer membrane (MOM) proteins (PubMed:22467864).</text>
</comment>
<comment type="similarity">
    <text evidence="4">Belongs to the MIM2 family.</text>
</comment>
<reference key="1">
    <citation type="journal article" date="1997" name="Nature">
        <title>The nucleotide sequence of Saccharomyces cerevisiae chromosome XII.</title>
        <authorList>
            <person name="Johnston M."/>
            <person name="Hillier L.W."/>
            <person name="Riles L."/>
            <person name="Albermann K."/>
            <person name="Andre B."/>
            <person name="Ansorge W."/>
            <person name="Benes V."/>
            <person name="Brueckner M."/>
            <person name="Delius H."/>
            <person name="Dubois E."/>
            <person name="Duesterhoeft A."/>
            <person name="Entian K.-D."/>
            <person name="Floeth M."/>
            <person name="Goffeau A."/>
            <person name="Hebling U."/>
            <person name="Heumann K."/>
            <person name="Heuss-Neitzel D."/>
            <person name="Hilbert H."/>
            <person name="Hilger F."/>
            <person name="Kleine K."/>
            <person name="Koetter P."/>
            <person name="Louis E.J."/>
            <person name="Messenguy F."/>
            <person name="Mewes H.-W."/>
            <person name="Miosga T."/>
            <person name="Moestl D."/>
            <person name="Mueller-Auer S."/>
            <person name="Nentwich U."/>
            <person name="Obermaier B."/>
            <person name="Piravandi E."/>
            <person name="Pohl T.M."/>
            <person name="Portetelle D."/>
            <person name="Purnelle B."/>
            <person name="Rechmann S."/>
            <person name="Rieger M."/>
            <person name="Rinke M."/>
            <person name="Rose M."/>
            <person name="Scharfe M."/>
            <person name="Scherens B."/>
            <person name="Scholler P."/>
            <person name="Schwager C."/>
            <person name="Schwarz S."/>
            <person name="Underwood A.P."/>
            <person name="Urrestarazu L.A."/>
            <person name="Vandenbol M."/>
            <person name="Verhasselt P."/>
            <person name="Vierendeels F."/>
            <person name="Voet M."/>
            <person name="Volckaert G."/>
            <person name="Voss H."/>
            <person name="Wambutt R."/>
            <person name="Wedler E."/>
            <person name="Wedler H."/>
            <person name="Zimmermann F.K."/>
            <person name="Zollner A."/>
            <person name="Hani J."/>
            <person name="Hoheisel J.D."/>
        </authorList>
    </citation>
    <scope>NUCLEOTIDE SEQUENCE [LARGE SCALE GENOMIC DNA]</scope>
    <source>
        <strain>ATCC 204508 / S288c</strain>
    </source>
</reference>
<reference key="2">
    <citation type="journal article" date="2014" name="G3 (Bethesda)">
        <title>The reference genome sequence of Saccharomyces cerevisiae: Then and now.</title>
        <authorList>
            <person name="Engel S.R."/>
            <person name="Dietrich F.S."/>
            <person name="Fisk D.G."/>
            <person name="Binkley G."/>
            <person name="Balakrishnan R."/>
            <person name="Costanzo M.C."/>
            <person name="Dwight S.S."/>
            <person name="Hitz B.C."/>
            <person name="Karra K."/>
            <person name="Nash R.S."/>
            <person name="Weng S."/>
            <person name="Wong E.D."/>
            <person name="Lloyd P."/>
            <person name="Skrzypek M.S."/>
            <person name="Miyasato S.R."/>
            <person name="Simison M."/>
            <person name="Cherry J.M."/>
        </authorList>
    </citation>
    <scope>GENOME REANNOTATION</scope>
    <source>
        <strain>ATCC 204508 / S288c</strain>
    </source>
</reference>
<reference key="3">
    <citation type="journal article" date="2000" name="FEBS Lett.">
        <title>Genomic exploration of the hemiascomycetous yeasts: 4. The genome of Saccharomyces cerevisiae revisited.</title>
        <authorList>
            <person name="Blandin G."/>
            <person name="Durrens P."/>
            <person name="Tekaia F."/>
            <person name="Aigle M."/>
            <person name="Bolotin-Fukuhara M."/>
            <person name="Bon E."/>
            <person name="Casaregola S."/>
            <person name="de Montigny J."/>
            <person name="Gaillardin C."/>
            <person name="Lepingle A."/>
            <person name="Llorente B."/>
            <person name="Malpertuy A."/>
            <person name="Neuveglise C."/>
            <person name="Ozier-Kalogeropoulos O."/>
            <person name="Perrin A."/>
            <person name="Potier S."/>
            <person name="Souciet J.-L."/>
            <person name="Talla E."/>
            <person name="Toffano-Nioche C."/>
            <person name="Wesolowski-Louvel M."/>
            <person name="Marck C."/>
            <person name="Dujon B."/>
        </authorList>
    </citation>
    <scope>GENOME REANNOTATION</scope>
</reference>
<reference key="4">
    <citation type="journal article" date="2012" name="J. Cell Sci.">
        <title>A crucial role for Mim2 in the biogenesis of mitochondrial outer membrane proteins.</title>
        <authorList>
            <person name="Dimmer K.S."/>
            <person name="Papic D."/>
            <person name="Schumann B."/>
            <person name="Sperl D."/>
            <person name="Krumpe K."/>
            <person name="Walther D.M."/>
            <person name="Rapaport D."/>
        </authorList>
    </citation>
    <scope>SUBCELLULAR LOCATION</scope>
    <scope>FUNCTION</scope>
    <scope>SUBUNIT</scope>
    <scope>INTERACTION WITH MIM1</scope>
    <scope>DISRUPTION PHENOTYPE</scope>
</reference>
<reference key="5">
    <citation type="journal article" date="2018" name="J. Proteome Res.">
        <title>Enrichment-based proteogenomics identifies microproteins, missing proteins, and novel smORFs in Saccharomyces cerevisiae.</title>
        <authorList>
            <person name="He C."/>
            <person name="Jia C."/>
            <person name="Zhang Y."/>
            <person name="Xu P."/>
        </authorList>
    </citation>
    <scope>IDENTIFICATION BY MASS SPECTROMETRY</scope>
</reference>
<sequence length="87" mass="9985">MADSEDTSVILQGIDTINSVEGLEEDGYLSDEDTSLSNELADAQRQWEESLQQLNKLLNWVLLPLLGKYIGRRMAKTLWSRFIEHFV</sequence>